<keyword id="KW-0997">Cell inner membrane</keyword>
<keyword id="KW-1003">Cell membrane</keyword>
<keyword id="KW-0406">Ion transport</keyword>
<keyword id="KW-0464">Manganese</keyword>
<keyword id="KW-0472">Membrane</keyword>
<keyword id="KW-0812">Transmembrane</keyword>
<keyword id="KW-1133">Transmembrane helix</keyword>
<keyword id="KW-0813">Transport</keyword>
<reference key="1">
    <citation type="journal article" date="2011" name="J. Bacteriol.">
        <title>Complete genome sequence of the plant growth-promoting endophyte Burkholderia phytofirmans strain PsJN.</title>
        <authorList>
            <person name="Weilharter A."/>
            <person name="Mitter B."/>
            <person name="Shin M.V."/>
            <person name="Chain P.S."/>
            <person name="Nowak J."/>
            <person name="Sessitsch A."/>
        </authorList>
    </citation>
    <scope>NUCLEOTIDE SEQUENCE [LARGE SCALE GENOMIC DNA]</scope>
    <source>
        <strain>DSM 17436 / LMG 22146 / PsJN</strain>
    </source>
</reference>
<organism>
    <name type="scientific">Paraburkholderia phytofirmans (strain DSM 17436 / LMG 22146 / PsJN)</name>
    <name type="common">Burkholderia phytofirmans</name>
    <dbReference type="NCBI Taxonomy" id="398527"/>
    <lineage>
        <taxon>Bacteria</taxon>
        <taxon>Pseudomonadati</taxon>
        <taxon>Pseudomonadota</taxon>
        <taxon>Betaproteobacteria</taxon>
        <taxon>Burkholderiales</taxon>
        <taxon>Burkholderiaceae</taxon>
        <taxon>Paraburkholderia</taxon>
    </lineage>
</organism>
<gene>
    <name evidence="1" type="primary">mntP</name>
    <name type="ordered locus">Bphyt_6717</name>
</gene>
<feature type="chain" id="PRO_1000200015" description="Putative manganese efflux pump MntP">
    <location>
        <begin position="1"/>
        <end position="189"/>
    </location>
</feature>
<feature type="transmembrane region" description="Helical" evidence="1">
    <location>
        <begin position="3"/>
        <end position="23"/>
    </location>
</feature>
<feature type="transmembrane region" description="Helical" evidence="1">
    <location>
        <begin position="41"/>
        <end position="61"/>
    </location>
</feature>
<feature type="transmembrane region" description="Helical" evidence="1">
    <location>
        <begin position="62"/>
        <end position="82"/>
    </location>
</feature>
<feature type="transmembrane region" description="Helical" evidence="1">
    <location>
        <begin position="104"/>
        <end position="124"/>
    </location>
</feature>
<feature type="transmembrane region" description="Helical" evidence="1">
    <location>
        <begin position="132"/>
        <end position="152"/>
    </location>
</feature>
<feature type="transmembrane region" description="Helical" evidence="1">
    <location>
        <begin position="168"/>
        <end position="188"/>
    </location>
</feature>
<accession>B2T9B0</accession>
<evidence type="ECO:0000255" key="1">
    <source>
        <dbReference type="HAMAP-Rule" id="MF_01521"/>
    </source>
</evidence>
<protein>
    <recommendedName>
        <fullName evidence="1">Putative manganese efflux pump MntP</fullName>
    </recommendedName>
</protein>
<sequence length="189" mass="19877">MNPVATLFLAFAMSTDAFAAAIGKGATLNRPHWREAVRTGLIFGVIEALTPLVGWFLGKAAAQYVSAWDHWIAFSLLLVLGARMVFNSFNTKEVEETKPSAHSFWLLALTGFATSIDAMAVGAGLAFVDVNIYSTAAAIGLATMAMVTIGVMLGRVIGHVAGRRAELAGGIVLIGIGSTILAEHLNIFG</sequence>
<name>MNTP_PARPJ</name>
<comment type="function">
    <text evidence="1">Probably functions as a manganese efflux pump.</text>
</comment>
<comment type="subcellular location">
    <subcellularLocation>
        <location evidence="1">Cell inner membrane</location>
        <topology evidence="1">Multi-pass membrane protein</topology>
    </subcellularLocation>
</comment>
<comment type="similarity">
    <text evidence="1">Belongs to the MntP (TC 9.B.29) family.</text>
</comment>
<dbReference type="EMBL" id="CP001053">
    <property type="protein sequence ID" value="ACD21012.1"/>
    <property type="molecule type" value="Genomic_DNA"/>
</dbReference>
<dbReference type="RefSeq" id="WP_012428512.1">
    <property type="nucleotide sequence ID" value="NC_010676.1"/>
</dbReference>
<dbReference type="STRING" id="398527.Bphyt_6717"/>
<dbReference type="KEGG" id="bpy:Bphyt_6717"/>
<dbReference type="eggNOG" id="COG1971">
    <property type="taxonomic scope" value="Bacteria"/>
</dbReference>
<dbReference type="HOGENOM" id="CLU_096410_0_0_4"/>
<dbReference type="OrthoDB" id="9811590at2"/>
<dbReference type="Proteomes" id="UP000001739">
    <property type="component" value="Chromosome 2"/>
</dbReference>
<dbReference type="GO" id="GO:0005886">
    <property type="term" value="C:plasma membrane"/>
    <property type="evidence" value="ECO:0007669"/>
    <property type="project" value="UniProtKB-SubCell"/>
</dbReference>
<dbReference type="GO" id="GO:0005384">
    <property type="term" value="F:manganese ion transmembrane transporter activity"/>
    <property type="evidence" value="ECO:0007669"/>
    <property type="project" value="UniProtKB-UniRule"/>
</dbReference>
<dbReference type="HAMAP" id="MF_01521">
    <property type="entry name" value="MntP_pump"/>
    <property type="match status" value="1"/>
</dbReference>
<dbReference type="InterPro" id="IPR003810">
    <property type="entry name" value="Mntp/YtaF"/>
</dbReference>
<dbReference type="InterPro" id="IPR022929">
    <property type="entry name" value="Put_MntP"/>
</dbReference>
<dbReference type="NCBIfam" id="NF008546">
    <property type="entry name" value="PRK11469.1"/>
    <property type="match status" value="1"/>
</dbReference>
<dbReference type="PANTHER" id="PTHR35529">
    <property type="entry name" value="MANGANESE EFFLUX PUMP MNTP-RELATED"/>
    <property type="match status" value="1"/>
</dbReference>
<dbReference type="PANTHER" id="PTHR35529:SF1">
    <property type="entry name" value="MANGANESE EFFLUX PUMP MNTP-RELATED"/>
    <property type="match status" value="1"/>
</dbReference>
<dbReference type="Pfam" id="PF02659">
    <property type="entry name" value="Mntp"/>
    <property type="match status" value="1"/>
</dbReference>
<proteinExistence type="inferred from homology"/>